<sequence>MEWQTRFSPLNLSTQDALPELSISRLDHLGMITMVGDDKKSYLHGQVTCDVVSLEKDQSTLGAHCDAKGKVWSVFRLFHHGDGYGMIQPKSAIEIELKEIKKYAVFSKVTIEESNDVILGVAGVNADAFVSALNEDAGDVRIINGGTAVKVEANRWLLVVTEEAAQALIENSDATLTTRELWTRFDIESALPFVSATAQNEHIPQALNIQALGGISFTKGCYTGQETVARAKYRGTNKRAMYIVKGVTSTALNDDAIELERSVGDNWRSVGTLLTHYQFSDNQAMGLIVLPNNLDDDTRLRLTSQPDCEWTIAELPYSLDDE</sequence>
<organism>
    <name type="scientific">Vibrio parahaemolyticus serotype O3:K6 (strain RIMD 2210633)</name>
    <dbReference type="NCBI Taxonomy" id="223926"/>
    <lineage>
        <taxon>Bacteria</taxon>
        <taxon>Pseudomonadati</taxon>
        <taxon>Pseudomonadota</taxon>
        <taxon>Gammaproteobacteria</taxon>
        <taxon>Vibrionales</taxon>
        <taxon>Vibrionaceae</taxon>
        <taxon>Vibrio</taxon>
    </lineage>
</organism>
<evidence type="ECO:0000255" key="1">
    <source>
        <dbReference type="HAMAP-Rule" id="MF_01175"/>
    </source>
</evidence>
<gene>
    <name type="ordered locus">VP2583</name>
</gene>
<feature type="chain" id="PRO_0000262905" description="tRNA-modifying protein YgfZ">
    <location>
        <begin position="1"/>
        <end position="322"/>
    </location>
</feature>
<feature type="binding site" evidence="1">
    <location>
        <position position="182"/>
    </location>
    <ligand>
        <name>folate</name>
        <dbReference type="ChEBI" id="CHEBI:62501"/>
    </ligand>
</feature>
<reference key="1">
    <citation type="journal article" date="2003" name="Lancet">
        <title>Genome sequence of Vibrio parahaemolyticus: a pathogenic mechanism distinct from that of V. cholerae.</title>
        <authorList>
            <person name="Makino K."/>
            <person name="Oshima K."/>
            <person name="Kurokawa K."/>
            <person name="Yokoyama K."/>
            <person name="Uda T."/>
            <person name="Tagomori K."/>
            <person name="Iijima Y."/>
            <person name="Najima M."/>
            <person name="Nakano M."/>
            <person name="Yamashita A."/>
            <person name="Kubota Y."/>
            <person name="Kimura S."/>
            <person name="Yasunaga T."/>
            <person name="Honda T."/>
            <person name="Shinagawa H."/>
            <person name="Hattori M."/>
            <person name="Iida T."/>
        </authorList>
    </citation>
    <scope>NUCLEOTIDE SEQUENCE [LARGE SCALE GENOMIC DNA]</scope>
    <source>
        <strain>RIMD 2210633</strain>
    </source>
</reference>
<keyword id="KW-0963">Cytoplasm</keyword>
<keyword id="KW-0290">Folate-binding</keyword>
<keyword id="KW-0819">tRNA processing</keyword>
<dbReference type="EMBL" id="BA000031">
    <property type="protein sequence ID" value="BAC60846.1"/>
    <property type="molecule type" value="Genomic_DNA"/>
</dbReference>
<dbReference type="RefSeq" id="NP_798962.1">
    <property type="nucleotide sequence ID" value="NC_004603.1"/>
</dbReference>
<dbReference type="SMR" id="Q87LM8"/>
<dbReference type="GeneID" id="1190107"/>
<dbReference type="KEGG" id="vpa:VP2583"/>
<dbReference type="PATRIC" id="fig|223926.6.peg.2480"/>
<dbReference type="eggNOG" id="COG0354">
    <property type="taxonomic scope" value="Bacteria"/>
</dbReference>
<dbReference type="HOGENOM" id="CLU_007884_6_1_6"/>
<dbReference type="Proteomes" id="UP000002493">
    <property type="component" value="Chromosome 1"/>
</dbReference>
<dbReference type="GO" id="GO:0005737">
    <property type="term" value="C:cytoplasm"/>
    <property type="evidence" value="ECO:0007669"/>
    <property type="project" value="UniProtKB-SubCell"/>
</dbReference>
<dbReference type="GO" id="GO:0005542">
    <property type="term" value="F:folic acid binding"/>
    <property type="evidence" value="ECO:0007669"/>
    <property type="project" value="UniProtKB-UniRule"/>
</dbReference>
<dbReference type="GO" id="GO:0016226">
    <property type="term" value="P:iron-sulfur cluster assembly"/>
    <property type="evidence" value="ECO:0007669"/>
    <property type="project" value="TreeGrafter"/>
</dbReference>
<dbReference type="GO" id="GO:0009451">
    <property type="term" value="P:RNA modification"/>
    <property type="evidence" value="ECO:0007669"/>
    <property type="project" value="InterPro"/>
</dbReference>
<dbReference type="GO" id="GO:0008033">
    <property type="term" value="P:tRNA processing"/>
    <property type="evidence" value="ECO:0007669"/>
    <property type="project" value="UniProtKB-UniRule"/>
</dbReference>
<dbReference type="FunFam" id="3.30.70.1400:FF:000002">
    <property type="entry name" value="tRNA-modifying protein YgfZ"/>
    <property type="match status" value="1"/>
</dbReference>
<dbReference type="Gene3D" id="2.40.30.160">
    <property type="match status" value="1"/>
</dbReference>
<dbReference type="Gene3D" id="3.30.70.1630">
    <property type="match status" value="1"/>
</dbReference>
<dbReference type="Gene3D" id="3.30.70.1400">
    <property type="entry name" value="Aminomethyltransferase beta-barrel domains"/>
    <property type="match status" value="1"/>
</dbReference>
<dbReference type="HAMAP" id="MF_01175">
    <property type="entry name" value="tRNA_modifying_YgfZ"/>
    <property type="match status" value="1"/>
</dbReference>
<dbReference type="InterPro" id="IPR029043">
    <property type="entry name" value="GcvT/YgfZ_C"/>
</dbReference>
<dbReference type="InterPro" id="IPR023758">
    <property type="entry name" value="tRNA-modifying_YgfZ"/>
</dbReference>
<dbReference type="InterPro" id="IPR045179">
    <property type="entry name" value="YgfZ/GcvT"/>
</dbReference>
<dbReference type="InterPro" id="IPR017703">
    <property type="entry name" value="YgfZ/GcvT_CS"/>
</dbReference>
<dbReference type="InterPro" id="IPR048451">
    <property type="entry name" value="YgfZ_barrel"/>
</dbReference>
<dbReference type="NCBIfam" id="NF007110">
    <property type="entry name" value="PRK09559.1"/>
    <property type="match status" value="1"/>
</dbReference>
<dbReference type="NCBIfam" id="TIGR03317">
    <property type="entry name" value="ygfZ_signature"/>
    <property type="match status" value="1"/>
</dbReference>
<dbReference type="PANTHER" id="PTHR22602">
    <property type="entry name" value="TRANSFERASE CAF17, MITOCHONDRIAL-RELATED"/>
    <property type="match status" value="1"/>
</dbReference>
<dbReference type="PANTHER" id="PTHR22602:SF0">
    <property type="entry name" value="TRANSFERASE CAF17, MITOCHONDRIAL-RELATED"/>
    <property type="match status" value="1"/>
</dbReference>
<dbReference type="Pfam" id="PF21130">
    <property type="entry name" value="YgfZ_barrel"/>
    <property type="match status" value="1"/>
</dbReference>
<dbReference type="SUPFAM" id="SSF101790">
    <property type="entry name" value="Aminomethyltransferase beta-barrel domain"/>
    <property type="match status" value="1"/>
</dbReference>
<dbReference type="SUPFAM" id="SSF103025">
    <property type="entry name" value="Folate-binding domain"/>
    <property type="match status" value="1"/>
</dbReference>
<protein>
    <recommendedName>
        <fullName evidence="1">tRNA-modifying protein YgfZ</fullName>
    </recommendedName>
</protein>
<comment type="function">
    <text evidence="1">Folate-binding protein involved in regulating the level of ATP-DnaA and in the modification of some tRNAs. It is probably a key factor in regulatory networks that act via tRNA modification, such as initiation of chromosomal replication.</text>
</comment>
<comment type="subcellular location">
    <subcellularLocation>
        <location evidence="1">Cytoplasm</location>
    </subcellularLocation>
</comment>
<comment type="similarity">
    <text evidence="1">Belongs to the tRNA-modifying YgfZ family.</text>
</comment>
<accession>Q87LM8</accession>
<name>YGFZ_VIBPA</name>
<proteinExistence type="inferred from homology"/>